<organism>
    <name type="scientific">Blarina brevicauda</name>
    <name type="common">Northern short-tailed shrew</name>
    <dbReference type="NCBI Taxonomy" id="9387"/>
    <lineage>
        <taxon>Eukaryota</taxon>
        <taxon>Metazoa</taxon>
        <taxon>Chordata</taxon>
        <taxon>Craniata</taxon>
        <taxon>Vertebrata</taxon>
        <taxon>Euteleostomi</taxon>
        <taxon>Mammalia</taxon>
        <taxon>Eutheria</taxon>
        <taxon>Laurasiatheria</taxon>
        <taxon>Eulipotyphla</taxon>
        <taxon>Soricidae</taxon>
        <taxon>Soricinae</taxon>
        <taxon>Blarina</taxon>
    </lineage>
</organism>
<sequence>VLSASDKTNLKAAWDKLGGQAANYGAEALERTFASFPTTKTYFPHFDLSPGSAQVKGHGKKVADALTKAVGSLDDLPGALSALSDLHAHKLRVDPVNFKLLSHCLLVTLASHHPADFTPAVHASLDKFLATVSTVLTSKYR</sequence>
<feature type="chain" id="PRO_0000415584" description="Hemoglobin subunit alpha">
    <location>
        <begin position="1"/>
        <end position="141"/>
    </location>
</feature>
<feature type="domain" description="Globin" evidence="3">
    <location>
        <begin position="1"/>
        <end position="141"/>
    </location>
</feature>
<feature type="binding site" evidence="3">
    <location>
        <position position="58"/>
    </location>
    <ligand>
        <name>O2</name>
        <dbReference type="ChEBI" id="CHEBI:15379"/>
    </ligand>
</feature>
<feature type="binding site" description="proximal binding residue" evidence="3">
    <location>
        <position position="87"/>
    </location>
    <ligand>
        <name>heme b</name>
        <dbReference type="ChEBI" id="CHEBI:60344"/>
    </ligand>
    <ligandPart>
        <name>Fe</name>
        <dbReference type="ChEBI" id="CHEBI:18248"/>
    </ligandPart>
</feature>
<feature type="modified residue" description="Phosphoserine" evidence="2">
    <location>
        <position position="3"/>
    </location>
</feature>
<feature type="modified residue" description="N6-succinyllysine" evidence="1">
    <location>
        <position position="7"/>
    </location>
</feature>
<feature type="modified residue" description="Phosphothreonine" evidence="2">
    <location>
        <position position="8"/>
    </location>
</feature>
<feature type="modified residue" description="N6-succinyllysine" evidence="1">
    <location>
        <position position="11"/>
    </location>
</feature>
<feature type="modified residue" description="N6-acetyllysine; alternate" evidence="2">
    <location>
        <position position="16"/>
    </location>
</feature>
<feature type="modified residue" description="N6-succinyllysine; alternate" evidence="1">
    <location>
        <position position="16"/>
    </location>
</feature>
<feature type="modified residue" description="Phosphotyrosine" evidence="2">
    <location>
        <position position="24"/>
    </location>
</feature>
<feature type="modified residue" description="Phosphoserine" evidence="2">
    <location>
        <position position="35"/>
    </location>
</feature>
<feature type="modified residue" description="N6-succinyllysine" evidence="1">
    <location>
        <position position="40"/>
    </location>
</feature>
<feature type="modified residue" description="Phosphoserine" evidence="2">
    <location>
        <position position="49"/>
    </location>
</feature>
<feature type="modified residue" description="Phosphoserine" evidence="1">
    <location>
        <position position="102"/>
    </location>
</feature>
<feature type="modified residue" description="Phosphothreonine" evidence="1">
    <location>
        <position position="108"/>
    </location>
</feature>
<feature type="modified residue" description="Phosphoserine" evidence="1">
    <location>
        <position position="124"/>
    </location>
</feature>
<feature type="modified residue" description="Phosphothreonine" evidence="1">
    <location>
        <position position="134"/>
    </location>
</feature>
<feature type="modified residue" description="Phosphothreonine" evidence="1">
    <location>
        <position position="137"/>
    </location>
</feature>
<feature type="modified residue" description="Phosphoserine" evidence="1">
    <location>
        <position position="138"/>
    </location>
</feature>
<feature type="unsure residue" description="L or I" evidence="4">
    <location>
        <position position="2"/>
    </location>
</feature>
<feature type="unsure residue" description="L or I" evidence="4">
    <location>
        <position position="10"/>
    </location>
</feature>
<feature type="unsure residue" description="L or I" evidence="4">
    <location>
        <position position="17"/>
    </location>
</feature>
<feature type="unsure residue" description="L or I" evidence="4">
    <location>
        <position position="29"/>
    </location>
</feature>
<feature type="unsure residue" description="L or I" evidence="4">
    <location>
        <position position="48"/>
    </location>
</feature>
<feature type="unsure residue" description="L or I" evidence="4">
    <location>
        <position position="66"/>
    </location>
</feature>
<feature type="unsure residue" description="L or I" evidence="4">
    <location>
        <position position="73"/>
    </location>
</feature>
<feature type="unsure residue" description="L or I" evidence="4">
    <location>
        <position position="76"/>
    </location>
</feature>
<feature type="unsure residue" description="L or I" evidence="4">
    <location>
        <position position="80"/>
    </location>
</feature>
<feature type="unsure residue" description="L or I" evidence="4">
    <location>
        <position position="83"/>
    </location>
</feature>
<feature type="unsure residue" description="L or I" evidence="4">
    <location>
        <position position="86"/>
    </location>
</feature>
<feature type="unsure residue" description="L or I" evidence="4">
    <location>
        <position position="91"/>
    </location>
</feature>
<feature type="unsure residue" description="L or I" evidence="4">
    <location>
        <position position="100"/>
    </location>
</feature>
<feature type="unsure residue" description="L or I" evidence="4">
    <location>
        <position position="101"/>
    </location>
</feature>
<feature type="unsure residue" description="L or I" evidence="4">
    <location>
        <position position="105"/>
    </location>
</feature>
<feature type="unsure residue" description="L or I" evidence="4">
    <location>
        <position position="106"/>
    </location>
</feature>
<feature type="unsure residue" description="L or I" evidence="4">
    <location>
        <position position="109"/>
    </location>
</feature>
<feature type="unsure residue" description="L or I" evidence="4">
    <location>
        <position position="125"/>
    </location>
</feature>
<feature type="unsure residue" description="L or I" evidence="4">
    <location>
        <position position="129"/>
    </location>
</feature>
<feature type="unsure residue" description="L or I" evidence="4">
    <location>
        <position position="136"/>
    </location>
</feature>
<protein>
    <recommendedName>
        <fullName evidence="5">Hemoglobin subunit alpha</fullName>
    </recommendedName>
</protein>
<evidence type="ECO:0000250" key="1">
    <source>
        <dbReference type="UniProtKB" id="P01942"/>
    </source>
</evidence>
<evidence type="ECO:0000250" key="2">
    <source>
        <dbReference type="UniProtKB" id="P69905"/>
    </source>
</evidence>
<evidence type="ECO:0000255" key="3">
    <source>
        <dbReference type="PROSITE-ProRule" id="PRU00238"/>
    </source>
</evidence>
<evidence type="ECO:0000269" key="4">
    <source>
    </source>
</evidence>
<evidence type="ECO:0000303" key="5">
    <source>
    </source>
</evidence>
<evidence type="ECO:0000305" key="6"/>
<name>HBA_BLABR</name>
<keyword id="KW-0007">Acetylation</keyword>
<keyword id="KW-0903">Direct protein sequencing</keyword>
<keyword id="KW-0349">Heme</keyword>
<keyword id="KW-0408">Iron</keyword>
<keyword id="KW-0479">Metal-binding</keyword>
<keyword id="KW-0561">Oxygen transport</keyword>
<keyword id="KW-0597">Phosphoprotein</keyword>
<keyword id="KW-0813">Transport</keyword>
<reference evidence="6" key="1">
    <citation type="journal article" date="2012" name="Biol. Chem.">
        <title>Development of a host blood meal database: de novo sequencing of hemoglobin from nine small mammals using mass spectrometry.</title>
        <authorList>
            <person name="Laskay U.A."/>
            <person name="Burg J."/>
            <person name="Kaleta E.J."/>
            <person name="Vilcins I.M."/>
            <person name="Telford Iii S.R."/>
            <person name="Barbour A.G."/>
            <person name="Wysocki V.H."/>
        </authorList>
    </citation>
    <scope>PROTEIN SEQUENCE</scope>
    <source>
        <tissue evidence="4">Erythrocyte</tissue>
    </source>
</reference>
<comment type="function">
    <text evidence="6">Involved in oxygen transport from the lung to the various peripheral tissues.</text>
</comment>
<comment type="subunit">
    <text evidence="6">Heterotetramer of two alpha chains and two beta chains.</text>
</comment>
<comment type="tissue specificity">
    <text evidence="6">Red blood cells.</text>
</comment>
<comment type="similarity">
    <text evidence="3">Belongs to the globin family.</text>
</comment>
<proteinExistence type="evidence at protein level"/>
<dbReference type="SMR" id="B3EWE1"/>
<dbReference type="GO" id="GO:0072562">
    <property type="term" value="C:blood microparticle"/>
    <property type="evidence" value="ECO:0007669"/>
    <property type="project" value="TreeGrafter"/>
</dbReference>
<dbReference type="GO" id="GO:0031838">
    <property type="term" value="C:haptoglobin-hemoglobin complex"/>
    <property type="evidence" value="ECO:0007669"/>
    <property type="project" value="TreeGrafter"/>
</dbReference>
<dbReference type="GO" id="GO:0005833">
    <property type="term" value="C:hemoglobin complex"/>
    <property type="evidence" value="ECO:0007669"/>
    <property type="project" value="InterPro"/>
</dbReference>
<dbReference type="GO" id="GO:0031720">
    <property type="term" value="F:haptoglobin binding"/>
    <property type="evidence" value="ECO:0007669"/>
    <property type="project" value="TreeGrafter"/>
</dbReference>
<dbReference type="GO" id="GO:0020037">
    <property type="term" value="F:heme binding"/>
    <property type="evidence" value="ECO:0007669"/>
    <property type="project" value="InterPro"/>
</dbReference>
<dbReference type="GO" id="GO:0005506">
    <property type="term" value="F:iron ion binding"/>
    <property type="evidence" value="ECO:0007669"/>
    <property type="project" value="InterPro"/>
</dbReference>
<dbReference type="GO" id="GO:0043177">
    <property type="term" value="F:organic acid binding"/>
    <property type="evidence" value="ECO:0007669"/>
    <property type="project" value="TreeGrafter"/>
</dbReference>
<dbReference type="GO" id="GO:0019825">
    <property type="term" value="F:oxygen binding"/>
    <property type="evidence" value="ECO:0007669"/>
    <property type="project" value="InterPro"/>
</dbReference>
<dbReference type="GO" id="GO:0005344">
    <property type="term" value="F:oxygen carrier activity"/>
    <property type="evidence" value="ECO:0007669"/>
    <property type="project" value="UniProtKB-KW"/>
</dbReference>
<dbReference type="GO" id="GO:0004601">
    <property type="term" value="F:peroxidase activity"/>
    <property type="evidence" value="ECO:0007669"/>
    <property type="project" value="TreeGrafter"/>
</dbReference>
<dbReference type="GO" id="GO:0042744">
    <property type="term" value="P:hydrogen peroxide catabolic process"/>
    <property type="evidence" value="ECO:0007669"/>
    <property type="project" value="TreeGrafter"/>
</dbReference>
<dbReference type="CDD" id="cd08927">
    <property type="entry name" value="Hb-alpha-like"/>
    <property type="match status" value="1"/>
</dbReference>
<dbReference type="FunFam" id="1.10.490.10:FF:000002">
    <property type="entry name" value="Hemoglobin subunit alpha"/>
    <property type="match status" value="1"/>
</dbReference>
<dbReference type="Gene3D" id="1.10.490.10">
    <property type="entry name" value="Globins"/>
    <property type="match status" value="1"/>
</dbReference>
<dbReference type="InterPro" id="IPR000971">
    <property type="entry name" value="Globin"/>
</dbReference>
<dbReference type="InterPro" id="IPR009050">
    <property type="entry name" value="Globin-like_sf"/>
</dbReference>
<dbReference type="InterPro" id="IPR012292">
    <property type="entry name" value="Globin/Proto"/>
</dbReference>
<dbReference type="InterPro" id="IPR002338">
    <property type="entry name" value="Hemoglobin_a-typ"/>
</dbReference>
<dbReference type="InterPro" id="IPR050056">
    <property type="entry name" value="Hemoglobin_oxygen_transport"/>
</dbReference>
<dbReference type="InterPro" id="IPR002339">
    <property type="entry name" value="Hemoglobin_pi"/>
</dbReference>
<dbReference type="PANTHER" id="PTHR11442">
    <property type="entry name" value="HEMOGLOBIN FAMILY MEMBER"/>
    <property type="match status" value="1"/>
</dbReference>
<dbReference type="PANTHER" id="PTHR11442:SF48">
    <property type="entry name" value="HEMOGLOBIN SUBUNIT ALPHA"/>
    <property type="match status" value="1"/>
</dbReference>
<dbReference type="Pfam" id="PF00042">
    <property type="entry name" value="Globin"/>
    <property type="match status" value="1"/>
</dbReference>
<dbReference type="PRINTS" id="PR00612">
    <property type="entry name" value="ALPHAHAEM"/>
</dbReference>
<dbReference type="PRINTS" id="PR00815">
    <property type="entry name" value="PIHAEM"/>
</dbReference>
<dbReference type="SUPFAM" id="SSF46458">
    <property type="entry name" value="Globin-like"/>
    <property type="match status" value="1"/>
</dbReference>
<dbReference type="PROSITE" id="PS01033">
    <property type="entry name" value="GLOBIN"/>
    <property type="match status" value="1"/>
</dbReference>
<accession>B3EWE1</accession>